<dbReference type="EMBL" id="CR761507">
    <property type="protein sequence ID" value="CAJ83948.1"/>
    <property type="molecule type" value="mRNA"/>
</dbReference>
<dbReference type="EMBL" id="BC089687">
    <property type="protein sequence ID" value="AAH89687.1"/>
    <property type="molecule type" value="mRNA"/>
</dbReference>
<dbReference type="RefSeq" id="NP_001015751.1">
    <property type="nucleotide sequence ID" value="NM_001015751.1"/>
</dbReference>
<dbReference type="SMR" id="Q5EBF8"/>
<dbReference type="FunCoup" id="Q5EBF8">
    <property type="interactions" value="932"/>
</dbReference>
<dbReference type="STRING" id="8364.ENSXETP00000042127"/>
<dbReference type="PaxDb" id="8364-ENSXETP00000028675"/>
<dbReference type="GeneID" id="548468"/>
<dbReference type="KEGG" id="xtr:548468"/>
<dbReference type="AGR" id="Xenbase:XB-GENE-482876"/>
<dbReference type="CTD" id="57085"/>
<dbReference type="Xenbase" id="XB-GENE-482876">
    <property type="gene designation" value="agtrap"/>
</dbReference>
<dbReference type="eggNOG" id="ENOG502S36M">
    <property type="taxonomic scope" value="Eukaryota"/>
</dbReference>
<dbReference type="HOGENOM" id="CLU_126745_0_0_1"/>
<dbReference type="InParanoid" id="Q5EBF8"/>
<dbReference type="OMA" id="IMNGWAV"/>
<dbReference type="OrthoDB" id="8191171at2759"/>
<dbReference type="PhylomeDB" id="Q5EBF8"/>
<dbReference type="TreeFam" id="TF324477"/>
<dbReference type="Proteomes" id="UP000008143">
    <property type="component" value="Chromosome 7"/>
</dbReference>
<dbReference type="Bgee" id="ENSXETG00000013094">
    <property type="expression patterns" value="Expressed in testis and 12 other cell types or tissues"/>
</dbReference>
<dbReference type="ExpressionAtlas" id="Q5EBF8">
    <property type="expression patterns" value="baseline"/>
</dbReference>
<dbReference type="GO" id="GO:0016020">
    <property type="term" value="C:membrane"/>
    <property type="evidence" value="ECO:0007669"/>
    <property type="project" value="UniProtKB-SubCell"/>
</dbReference>
<dbReference type="GO" id="GO:0038166">
    <property type="term" value="P:angiotensin-activated signaling pathway"/>
    <property type="evidence" value="ECO:0007669"/>
    <property type="project" value="InterPro"/>
</dbReference>
<dbReference type="InterPro" id="IPR009436">
    <property type="entry name" value="AGTRAP"/>
</dbReference>
<dbReference type="PANTHER" id="PTHR16521">
    <property type="entry name" value="TYPE-1 ANGIOTENSIN II RECEPTOR-ASSOCIATED PROTEIN"/>
    <property type="match status" value="1"/>
</dbReference>
<dbReference type="PANTHER" id="PTHR16521:SF3">
    <property type="entry name" value="TYPE-1 ANGIOTENSIN II RECEPTOR-ASSOCIATED PROTEIN"/>
    <property type="match status" value="1"/>
</dbReference>
<dbReference type="Pfam" id="PF06396">
    <property type="entry name" value="AGTRAP"/>
    <property type="match status" value="1"/>
</dbReference>
<dbReference type="SMART" id="SM00805">
    <property type="entry name" value="AGTRAP"/>
    <property type="match status" value="1"/>
</dbReference>
<sequence>MELPAVNLKAIVFTHWLLTVFACMIDWLPKAYGLANITILAMGVWAIAQRDSIDAIFMFLIGLLLTILTDILLFALYFTEAEKASESGPLRDLFRFSSGMGIFSLLLKPLSCFFMYHMYRERGGEYFVNLGFITLSRDRSSYQSIEHMDPPADQDNKLPSRTY</sequence>
<reference key="1">
    <citation type="submission" date="2006-03" db="EMBL/GenBank/DDBJ databases">
        <authorList>
            <consortium name="Sanger Xenopus tropicalis EST/cDNA project"/>
        </authorList>
    </citation>
    <scope>NUCLEOTIDE SEQUENCE [LARGE SCALE MRNA]</scope>
    <source>
        <tissue>Gastrula</tissue>
    </source>
</reference>
<reference key="2">
    <citation type="submission" date="2004-05" db="EMBL/GenBank/DDBJ databases">
        <authorList>
            <consortium name="NIH - Xenopus Gene Collection (XGC) project"/>
        </authorList>
    </citation>
    <scope>NUCLEOTIDE SEQUENCE [LARGE SCALE MRNA]</scope>
    <source>
        <strain>F6</strain>
    </source>
</reference>
<accession>Q5EBF8</accession>
<accession>Q28G84</accession>
<proteinExistence type="evidence at transcript level"/>
<keyword id="KW-0472">Membrane</keyword>
<keyword id="KW-1185">Reference proteome</keyword>
<keyword id="KW-0812">Transmembrane</keyword>
<keyword id="KW-1133">Transmembrane helix</keyword>
<gene>
    <name type="primary">agtrap</name>
    <name type="ORF">TGas011p03.1</name>
</gene>
<protein>
    <recommendedName>
        <fullName>Type-1 angiotensin II receptor-associated protein-like</fullName>
    </recommendedName>
</protein>
<feature type="chain" id="PRO_0000064739" description="Type-1 angiotensin II receptor-associated protein-like">
    <location>
        <begin position="1"/>
        <end position="163"/>
    </location>
</feature>
<feature type="topological domain" description="Extracellular" evidence="2">
    <location>
        <begin position="1"/>
        <end position="28"/>
    </location>
</feature>
<feature type="transmembrane region" description="Helical" evidence="2">
    <location>
        <begin position="29"/>
        <end position="49"/>
    </location>
</feature>
<feature type="topological domain" description="Cytoplasmic" evidence="2">
    <location>
        <begin position="50"/>
        <end position="55"/>
    </location>
</feature>
<feature type="transmembrane region" description="Helical" evidence="2">
    <location>
        <begin position="56"/>
        <end position="76"/>
    </location>
</feature>
<feature type="topological domain" description="Extracellular" evidence="2">
    <location>
        <begin position="77"/>
        <end position="95"/>
    </location>
</feature>
<feature type="transmembrane region" description="Helical" evidence="2">
    <location>
        <begin position="96"/>
        <end position="116"/>
    </location>
</feature>
<feature type="topological domain" description="Cytoplasmic" evidence="2">
    <location>
        <begin position="117"/>
        <end position="163"/>
    </location>
</feature>
<comment type="function">
    <text evidence="1">Appears to be a negative regulator of angiotensin II type I receptor-mediated signaling.</text>
</comment>
<comment type="subcellular location">
    <subcellularLocation>
        <location evidence="3">Membrane</location>
        <topology evidence="3">Multi-pass membrane protein</topology>
    </subcellularLocation>
</comment>
<organism>
    <name type="scientific">Xenopus tropicalis</name>
    <name type="common">Western clawed frog</name>
    <name type="synonym">Silurana tropicalis</name>
    <dbReference type="NCBI Taxonomy" id="8364"/>
    <lineage>
        <taxon>Eukaryota</taxon>
        <taxon>Metazoa</taxon>
        <taxon>Chordata</taxon>
        <taxon>Craniata</taxon>
        <taxon>Vertebrata</taxon>
        <taxon>Euteleostomi</taxon>
        <taxon>Amphibia</taxon>
        <taxon>Batrachia</taxon>
        <taxon>Anura</taxon>
        <taxon>Pipoidea</taxon>
        <taxon>Pipidae</taxon>
        <taxon>Xenopodinae</taxon>
        <taxon>Xenopus</taxon>
        <taxon>Silurana</taxon>
    </lineage>
</organism>
<name>ATRAP_XENTR</name>
<evidence type="ECO:0000250" key="1"/>
<evidence type="ECO:0000255" key="2"/>
<evidence type="ECO:0000305" key="3"/>